<reference key="1">
    <citation type="submission" date="2008-08" db="EMBL/GenBank/DDBJ databases">
        <title>Complete sequence of Vibrio fischeri strain MJ11.</title>
        <authorList>
            <person name="Mandel M.J."/>
            <person name="Stabb E.V."/>
            <person name="Ruby E.G."/>
            <person name="Ferriera S."/>
            <person name="Johnson J."/>
            <person name="Kravitz S."/>
            <person name="Beeson K."/>
            <person name="Sutton G."/>
            <person name="Rogers Y.-H."/>
            <person name="Friedman R."/>
            <person name="Frazier M."/>
            <person name="Venter J.C."/>
        </authorList>
    </citation>
    <scope>NUCLEOTIDE SEQUENCE [LARGE SCALE GENOMIC DNA]</scope>
    <source>
        <strain>MJ11</strain>
    </source>
</reference>
<feature type="chain" id="PRO_1000197160" description="Trp operon repressor homolog">
    <location>
        <begin position="1"/>
        <end position="108"/>
    </location>
</feature>
<feature type="DNA-binding region" evidence="1">
    <location>
        <begin position="59"/>
        <end position="82"/>
    </location>
</feature>
<accession>B5FAQ3</accession>
<sequence length="108" mass="12124">MSGSAKYSDWSQVMTLIANAAEQGNHQPLLTMLMTPDEREALVARVNIFHELLQGELSQRQISQLLGVGVATITRGSNELKSHTDEEKVWLMDLLEKSTKNELDVEKE</sequence>
<protein>
    <recommendedName>
        <fullName evidence="1">Trp operon repressor homolog</fullName>
    </recommendedName>
</protein>
<dbReference type="EMBL" id="CP001139">
    <property type="protein sequence ID" value="ACH66512.1"/>
    <property type="molecule type" value="Genomic_DNA"/>
</dbReference>
<dbReference type="RefSeq" id="WP_012533782.1">
    <property type="nucleotide sequence ID" value="NC_011184.1"/>
</dbReference>
<dbReference type="SMR" id="B5FAQ3"/>
<dbReference type="KEGG" id="vfm:VFMJ11_0571"/>
<dbReference type="HOGENOM" id="CLU_147939_0_0_6"/>
<dbReference type="Proteomes" id="UP000001857">
    <property type="component" value="Chromosome I"/>
</dbReference>
<dbReference type="GO" id="GO:0005737">
    <property type="term" value="C:cytoplasm"/>
    <property type="evidence" value="ECO:0007669"/>
    <property type="project" value="UniProtKB-SubCell"/>
</dbReference>
<dbReference type="GO" id="GO:0003700">
    <property type="term" value="F:DNA-binding transcription factor activity"/>
    <property type="evidence" value="ECO:0007669"/>
    <property type="project" value="InterPro"/>
</dbReference>
<dbReference type="GO" id="GO:0043565">
    <property type="term" value="F:sequence-specific DNA binding"/>
    <property type="evidence" value="ECO:0007669"/>
    <property type="project" value="InterPro"/>
</dbReference>
<dbReference type="GO" id="GO:0045892">
    <property type="term" value="P:negative regulation of DNA-templated transcription"/>
    <property type="evidence" value="ECO:0007669"/>
    <property type="project" value="UniProtKB-UniRule"/>
</dbReference>
<dbReference type="Gene3D" id="1.10.1270.10">
    <property type="entry name" value="TrpR-like"/>
    <property type="match status" value="1"/>
</dbReference>
<dbReference type="HAMAP" id="MF_00475">
    <property type="entry name" value="Trp_repressor"/>
    <property type="match status" value="1"/>
</dbReference>
<dbReference type="InterPro" id="IPR000831">
    <property type="entry name" value="Trp_repress"/>
</dbReference>
<dbReference type="InterPro" id="IPR013335">
    <property type="entry name" value="Trp_repress_bac"/>
</dbReference>
<dbReference type="InterPro" id="IPR010921">
    <property type="entry name" value="Trp_repressor/repl_initiator"/>
</dbReference>
<dbReference type="InterPro" id="IPR038116">
    <property type="entry name" value="TrpR-like_sf"/>
</dbReference>
<dbReference type="NCBIfam" id="TIGR01321">
    <property type="entry name" value="TrpR"/>
    <property type="match status" value="1"/>
</dbReference>
<dbReference type="PANTHER" id="PTHR38025">
    <property type="entry name" value="TRP OPERON REPRESSOR"/>
    <property type="match status" value="1"/>
</dbReference>
<dbReference type="PANTHER" id="PTHR38025:SF1">
    <property type="entry name" value="TRP OPERON REPRESSOR"/>
    <property type="match status" value="1"/>
</dbReference>
<dbReference type="Pfam" id="PF01371">
    <property type="entry name" value="Trp_repressor"/>
    <property type="match status" value="1"/>
</dbReference>
<dbReference type="PIRSF" id="PIRSF003196">
    <property type="entry name" value="Trp_repressor"/>
    <property type="match status" value="1"/>
</dbReference>
<dbReference type="SUPFAM" id="SSF48295">
    <property type="entry name" value="TrpR-like"/>
    <property type="match status" value="1"/>
</dbReference>
<name>TRPR_ALIFM</name>
<evidence type="ECO:0000255" key="1">
    <source>
        <dbReference type="HAMAP-Rule" id="MF_00475"/>
    </source>
</evidence>
<proteinExistence type="inferred from homology"/>
<comment type="function">
    <text evidence="1">This protein is an aporepressor. When complexed with L-tryptophan it binds the operator region of the trp operon and prevents the initiation of transcription.</text>
</comment>
<comment type="subunit">
    <text evidence="1">Homodimer.</text>
</comment>
<comment type="subcellular location">
    <subcellularLocation>
        <location evidence="1">Cytoplasm</location>
    </subcellularLocation>
</comment>
<comment type="similarity">
    <text evidence="1">Belongs to the TrpR family.</text>
</comment>
<organism>
    <name type="scientific">Aliivibrio fischeri (strain MJ11)</name>
    <name type="common">Vibrio fischeri</name>
    <dbReference type="NCBI Taxonomy" id="388396"/>
    <lineage>
        <taxon>Bacteria</taxon>
        <taxon>Pseudomonadati</taxon>
        <taxon>Pseudomonadota</taxon>
        <taxon>Gammaproteobacteria</taxon>
        <taxon>Vibrionales</taxon>
        <taxon>Vibrionaceae</taxon>
        <taxon>Aliivibrio</taxon>
    </lineage>
</organism>
<gene>
    <name evidence="1" type="primary">trpR</name>
    <name type="ordered locus">VFMJ11_0571</name>
</gene>
<keyword id="KW-0963">Cytoplasm</keyword>
<keyword id="KW-0238">DNA-binding</keyword>
<keyword id="KW-0678">Repressor</keyword>
<keyword id="KW-0804">Transcription</keyword>
<keyword id="KW-0805">Transcription regulation</keyword>